<organism>
    <name type="scientific">Staphylococcus aureus (strain COL)</name>
    <dbReference type="NCBI Taxonomy" id="93062"/>
    <lineage>
        <taxon>Bacteria</taxon>
        <taxon>Bacillati</taxon>
        <taxon>Bacillota</taxon>
        <taxon>Bacilli</taxon>
        <taxon>Bacillales</taxon>
        <taxon>Staphylococcaceae</taxon>
        <taxon>Staphylococcus</taxon>
    </lineage>
</organism>
<evidence type="ECO:0000255" key="1">
    <source>
        <dbReference type="HAMAP-Rule" id="MF_01263"/>
    </source>
</evidence>
<keyword id="KW-0067">ATP-binding</keyword>
<keyword id="KW-0460">Magnesium</keyword>
<keyword id="KW-0479">Metal-binding</keyword>
<keyword id="KW-0547">Nucleotide-binding</keyword>
<keyword id="KW-0548">Nucleotidyltransferase</keyword>
<keyword id="KW-0692">RNA repair</keyword>
<keyword id="KW-0694">RNA-binding</keyword>
<keyword id="KW-0808">Transferase</keyword>
<keyword id="KW-0819">tRNA processing</keyword>
<comment type="function">
    <text evidence="1">Catalyzes the addition and repair of the essential 3'-terminal CCA sequence in tRNAs without using a nucleic acid template. Adds these three nucleotides in the order of C, C, and A to the tRNA nucleotide-73, using CTP and ATP as substrates and producing inorganic pyrophosphate. tRNA 3'-terminal CCA addition is required both for tRNA processing and repair. Also involved in tRNA surveillance by mediating tandem CCA addition to generate a CCACCA at the 3' terminus of unstable tRNAs. While stable tRNAs receive only 3'-terminal CCA, unstable tRNAs are marked with CCACCA and rapidly degraded.</text>
</comment>
<comment type="catalytic activity">
    <reaction evidence="1">
        <text>a tRNA precursor + 2 CTP + ATP = a tRNA with a 3' CCA end + 3 diphosphate</text>
        <dbReference type="Rhea" id="RHEA:14433"/>
        <dbReference type="Rhea" id="RHEA-COMP:10465"/>
        <dbReference type="Rhea" id="RHEA-COMP:10468"/>
        <dbReference type="ChEBI" id="CHEBI:30616"/>
        <dbReference type="ChEBI" id="CHEBI:33019"/>
        <dbReference type="ChEBI" id="CHEBI:37563"/>
        <dbReference type="ChEBI" id="CHEBI:74896"/>
        <dbReference type="ChEBI" id="CHEBI:83071"/>
        <dbReference type="EC" id="2.7.7.72"/>
    </reaction>
</comment>
<comment type="catalytic activity">
    <reaction evidence="1">
        <text>a tRNA with a 3' CCA end + 2 CTP + ATP = a tRNA with a 3' CCACCA end + 3 diphosphate</text>
        <dbReference type="Rhea" id="RHEA:76235"/>
        <dbReference type="Rhea" id="RHEA-COMP:10468"/>
        <dbReference type="Rhea" id="RHEA-COMP:18655"/>
        <dbReference type="ChEBI" id="CHEBI:30616"/>
        <dbReference type="ChEBI" id="CHEBI:33019"/>
        <dbReference type="ChEBI" id="CHEBI:37563"/>
        <dbReference type="ChEBI" id="CHEBI:83071"/>
        <dbReference type="ChEBI" id="CHEBI:195187"/>
    </reaction>
    <physiologicalReaction direction="left-to-right" evidence="1">
        <dbReference type="Rhea" id="RHEA:76236"/>
    </physiologicalReaction>
</comment>
<comment type="cofactor">
    <cofactor evidence="1">
        <name>Mg(2+)</name>
        <dbReference type="ChEBI" id="CHEBI:18420"/>
    </cofactor>
</comment>
<comment type="subunit">
    <text evidence="1">Homodimer.</text>
</comment>
<comment type="miscellaneous">
    <text evidence="1">A single active site specifically recognizes both ATP and CTP and is responsible for their addition.</text>
</comment>
<comment type="similarity">
    <text evidence="1">Belongs to the tRNA nucleotidyltransferase/poly(A) polymerase family. Bacterial CCA-adding enzyme type 3 subfamily.</text>
</comment>
<proteinExistence type="inferred from homology"/>
<accession>Q5HFW6</accession>
<name>CCA_STAAC</name>
<reference key="1">
    <citation type="journal article" date="2005" name="J. Bacteriol.">
        <title>Insights on evolution of virulence and resistance from the complete genome analysis of an early methicillin-resistant Staphylococcus aureus strain and a biofilm-producing methicillin-resistant Staphylococcus epidermidis strain.</title>
        <authorList>
            <person name="Gill S.R."/>
            <person name="Fouts D.E."/>
            <person name="Archer G.L."/>
            <person name="Mongodin E.F."/>
            <person name="DeBoy R.T."/>
            <person name="Ravel J."/>
            <person name="Paulsen I.T."/>
            <person name="Kolonay J.F."/>
            <person name="Brinkac L.M."/>
            <person name="Beanan M.J."/>
            <person name="Dodson R.J."/>
            <person name="Daugherty S.C."/>
            <person name="Madupu R."/>
            <person name="Angiuoli S.V."/>
            <person name="Durkin A.S."/>
            <person name="Haft D.H."/>
            <person name="Vamathevan J.J."/>
            <person name="Khouri H."/>
            <person name="Utterback T.R."/>
            <person name="Lee C."/>
            <person name="Dimitrov G."/>
            <person name="Jiang L."/>
            <person name="Qin H."/>
            <person name="Weidman J."/>
            <person name="Tran K."/>
            <person name="Kang K.H."/>
            <person name="Hance I.R."/>
            <person name="Nelson K.E."/>
            <person name="Fraser C.M."/>
        </authorList>
    </citation>
    <scope>NUCLEOTIDE SEQUENCE [LARGE SCALE GENOMIC DNA]</scope>
    <source>
        <strain>COL</strain>
    </source>
</reference>
<sequence>MDKSLFEQARPILEQIQDNGFEAYYVGGSVRDYVMGRNIHDIDITTSATPDEIESIFSHTIPVGKEHGTINVVFNDENYEVTTFRAEEDYVDHRRPSGVTFVRDLYEDLQRRDFTMNAIAMDTAYKLYDYFDGQQDINNRIIRTVGIAEERFQEDALRMIRCLRFQSQLSFDIATETFEAMRIQMADIKFLSIERIVIELTKLMRGINVEKSFNHLKSLKAFNYMPYFEHLDMNQINVTEAIDLELLIAIVSVKFDINYSLKPLKLSNRQVKDINQYIQIMNALPSIITKEQLKMFVYDYDTHLIKNVMVAADVLKANDIQGHEPLIVNLQTIDETLHRLPMHNRKDMMVNGGVLMAHLNAKSGPWLKDVLRQIEIAIVTGKVSNEETEILKWVDNHVKI</sequence>
<protein>
    <recommendedName>
        <fullName evidence="1">CCA-adding enzyme</fullName>
        <ecNumber evidence="1">2.7.7.72</ecNumber>
    </recommendedName>
    <alternativeName>
        <fullName evidence="1">CCA tRNA nucleotidyltransferase</fullName>
    </alternativeName>
    <alternativeName>
        <fullName evidence="1">tRNA CCA-pyrophosphorylase</fullName>
    </alternativeName>
    <alternativeName>
        <fullName evidence="1">tRNA adenylyl-/cytidylyl- transferase</fullName>
    </alternativeName>
    <alternativeName>
        <fullName evidence="1">tRNA nucleotidyltransferase</fullName>
    </alternativeName>
    <alternativeName>
        <fullName evidence="1">tRNA-NT</fullName>
    </alternativeName>
</protein>
<gene>
    <name evidence="1" type="primary">cca</name>
    <name type="ordered locus">SACOL1497</name>
</gene>
<dbReference type="EC" id="2.7.7.72" evidence="1"/>
<dbReference type="EMBL" id="CP000046">
    <property type="protein sequence ID" value="AAW36692.1"/>
    <property type="molecule type" value="Genomic_DNA"/>
</dbReference>
<dbReference type="RefSeq" id="WP_000361544.1">
    <property type="nucleotide sequence ID" value="NZ_JBGOFO010000003.1"/>
</dbReference>
<dbReference type="SMR" id="Q5HFW6"/>
<dbReference type="KEGG" id="sac:SACOL1497"/>
<dbReference type="HOGENOM" id="CLU_015961_3_0_9"/>
<dbReference type="Proteomes" id="UP000000530">
    <property type="component" value="Chromosome"/>
</dbReference>
<dbReference type="GO" id="GO:0005524">
    <property type="term" value="F:ATP binding"/>
    <property type="evidence" value="ECO:0007669"/>
    <property type="project" value="UniProtKB-UniRule"/>
</dbReference>
<dbReference type="GO" id="GO:0004810">
    <property type="term" value="F:CCA tRNA nucleotidyltransferase activity"/>
    <property type="evidence" value="ECO:0007669"/>
    <property type="project" value="UniProtKB-UniRule"/>
</dbReference>
<dbReference type="GO" id="GO:0000287">
    <property type="term" value="F:magnesium ion binding"/>
    <property type="evidence" value="ECO:0007669"/>
    <property type="project" value="UniProtKB-UniRule"/>
</dbReference>
<dbReference type="GO" id="GO:0000049">
    <property type="term" value="F:tRNA binding"/>
    <property type="evidence" value="ECO:0007669"/>
    <property type="project" value="UniProtKB-UniRule"/>
</dbReference>
<dbReference type="GO" id="GO:0042245">
    <property type="term" value="P:RNA repair"/>
    <property type="evidence" value="ECO:0007669"/>
    <property type="project" value="UniProtKB-KW"/>
</dbReference>
<dbReference type="GO" id="GO:0001680">
    <property type="term" value="P:tRNA 3'-terminal CCA addition"/>
    <property type="evidence" value="ECO:0007669"/>
    <property type="project" value="UniProtKB-UniRule"/>
</dbReference>
<dbReference type="CDD" id="cd05398">
    <property type="entry name" value="NT_ClassII-CCAase"/>
    <property type="match status" value="1"/>
</dbReference>
<dbReference type="Gene3D" id="1.10.246.80">
    <property type="match status" value="1"/>
</dbReference>
<dbReference type="Gene3D" id="3.30.460.10">
    <property type="entry name" value="Beta Polymerase, domain 2"/>
    <property type="match status" value="1"/>
</dbReference>
<dbReference type="Gene3D" id="1.10.3090.10">
    <property type="entry name" value="cca-adding enzyme, domain 2"/>
    <property type="match status" value="1"/>
</dbReference>
<dbReference type="HAMAP" id="MF_01263">
    <property type="entry name" value="CCA_bact_type3"/>
    <property type="match status" value="1"/>
</dbReference>
<dbReference type="InterPro" id="IPR050264">
    <property type="entry name" value="Bact_CCA-adding_enz_type3_sf"/>
</dbReference>
<dbReference type="InterPro" id="IPR032810">
    <property type="entry name" value="CCA-adding_enz_C"/>
</dbReference>
<dbReference type="InterPro" id="IPR023068">
    <property type="entry name" value="CCA-adding_enz_firmicutes"/>
</dbReference>
<dbReference type="InterPro" id="IPR043519">
    <property type="entry name" value="NT_sf"/>
</dbReference>
<dbReference type="InterPro" id="IPR002646">
    <property type="entry name" value="PolA_pol_head_dom"/>
</dbReference>
<dbReference type="InterPro" id="IPR032828">
    <property type="entry name" value="PolyA_RNA-bd"/>
</dbReference>
<dbReference type="NCBIfam" id="NF009814">
    <property type="entry name" value="PRK13299.1"/>
    <property type="match status" value="1"/>
</dbReference>
<dbReference type="PANTHER" id="PTHR46173">
    <property type="entry name" value="CCA TRNA NUCLEOTIDYLTRANSFERASE 1, MITOCHONDRIAL"/>
    <property type="match status" value="1"/>
</dbReference>
<dbReference type="PANTHER" id="PTHR46173:SF1">
    <property type="entry name" value="CCA TRNA NUCLEOTIDYLTRANSFERASE 1, MITOCHONDRIAL"/>
    <property type="match status" value="1"/>
</dbReference>
<dbReference type="Pfam" id="PF01743">
    <property type="entry name" value="PolyA_pol"/>
    <property type="match status" value="1"/>
</dbReference>
<dbReference type="Pfam" id="PF12627">
    <property type="entry name" value="PolyA_pol_RNAbd"/>
    <property type="match status" value="1"/>
</dbReference>
<dbReference type="Pfam" id="PF13735">
    <property type="entry name" value="tRNA_NucTran2_2"/>
    <property type="match status" value="1"/>
</dbReference>
<dbReference type="SUPFAM" id="SSF81301">
    <property type="entry name" value="Nucleotidyltransferase"/>
    <property type="match status" value="1"/>
</dbReference>
<dbReference type="SUPFAM" id="SSF81891">
    <property type="entry name" value="Poly A polymerase C-terminal region-like"/>
    <property type="match status" value="1"/>
</dbReference>
<feature type="chain" id="PRO_0000139045" description="CCA-adding enzyme">
    <location>
        <begin position="1"/>
        <end position="400"/>
    </location>
</feature>
<feature type="binding site" evidence="1">
    <location>
        <position position="28"/>
    </location>
    <ligand>
        <name>ATP</name>
        <dbReference type="ChEBI" id="CHEBI:30616"/>
    </ligand>
</feature>
<feature type="binding site" evidence="1">
    <location>
        <position position="28"/>
    </location>
    <ligand>
        <name>CTP</name>
        <dbReference type="ChEBI" id="CHEBI:37563"/>
    </ligand>
</feature>
<feature type="binding site" evidence="1">
    <location>
        <position position="31"/>
    </location>
    <ligand>
        <name>ATP</name>
        <dbReference type="ChEBI" id="CHEBI:30616"/>
    </ligand>
</feature>
<feature type="binding site" evidence="1">
    <location>
        <position position="31"/>
    </location>
    <ligand>
        <name>CTP</name>
        <dbReference type="ChEBI" id="CHEBI:37563"/>
    </ligand>
</feature>
<feature type="binding site" evidence="1">
    <location>
        <position position="41"/>
    </location>
    <ligand>
        <name>Mg(2+)</name>
        <dbReference type="ChEBI" id="CHEBI:18420"/>
    </ligand>
</feature>
<feature type="binding site" evidence="1">
    <location>
        <position position="43"/>
    </location>
    <ligand>
        <name>Mg(2+)</name>
        <dbReference type="ChEBI" id="CHEBI:18420"/>
    </ligand>
</feature>
<feature type="binding site" evidence="1">
    <location>
        <position position="112"/>
    </location>
    <ligand>
        <name>ATP</name>
        <dbReference type="ChEBI" id="CHEBI:30616"/>
    </ligand>
</feature>
<feature type="binding site" evidence="1">
    <location>
        <position position="112"/>
    </location>
    <ligand>
        <name>CTP</name>
        <dbReference type="ChEBI" id="CHEBI:37563"/>
    </ligand>
</feature>
<feature type="binding site" evidence="1">
    <location>
        <position position="155"/>
    </location>
    <ligand>
        <name>ATP</name>
        <dbReference type="ChEBI" id="CHEBI:30616"/>
    </ligand>
</feature>
<feature type="binding site" evidence="1">
    <location>
        <position position="155"/>
    </location>
    <ligand>
        <name>CTP</name>
        <dbReference type="ChEBI" id="CHEBI:37563"/>
    </ligand>
</feature>
<feature type="binding site" evidence="1">
    <location>
        <position position="158"/>
    </location>
    <ligand>
        <name>ATP</name>
        <dbReference type="ChEBI" id="CHEBI:30616"/>
    </ligand>
</feature>
<feature type="binding site" evidence="1">
    <location>
        <position position="158"/>
    </location>
    <ligand>
        <name>CTP</name>
        <dbReference type="ChEBI" id="CHEBI:37563"/>
    </ligand>
</feature>
<feature type="binding site" evidence="1">
    <location>
        <position position="161"/>
    </location>
    <ligand>
        <name>ATP</name>
        <dbReference type="ChEBI" id="CHEBI:30616"/>
    </ligand>
</feature>
<feature type="binding site" evidence="1">
    <location>
        <position position="161"/>
    </location>
    <ligand>
        <name>CTP</name>
        <dbReference type="ChEBI" id="CHEBI:37563"/>
    </ligand>
</feature>
<feature type="binding site" evidence="1">
    <location>
        <position position="164"/>
    </location>
    <ligand>
        <name>ATP</name>
        <dbReference type="ChEBI" id="CHEBI:30616"/>
    </ligand>
</feature>
<feature type="binding site" evidence="1">
    <location>
        <position position="164"/>
    </location>
    <ligand>
        <name>CTP</name>
        <dbReference type="ChEBI" id="CHEBI:37563"/>
    </ligand>
</feature>